<organism>
    <name type="scientific">Mycobacterium tuberculosis (strain ATCC 25618 / H37Rv)</name>
    <dbReference type="NCBI Taxonomy" id="83332"/>
    <lineage>
        <taxon>Bacteria</taxon>
        <taxon>Bacillati</taxon>
        <taxon>Actinomycetota</taxon>
        <taxon>Actinomycetes</taxon>
        <taxon>Mycobacteriales</taxon>
        <taxon>Mycobacteriaceae</taxon>
        <taxon>Mycobacterium</taxon>
        <taxon>Mycobacterium tuberculosis complex</taxon>
    </lineage>
</organism>
<evidence type="ECO:0000256" key="1">
    <source>
        <dbReference type="SAM" id="MobiDB-lite"/>
    </source>
</evidence>
<evidence type="ECO:0000269" key="2">
    <source>
    </source>
</evidence>
<evidence type="ECO:0000269" key="3">
    <source>
    </source>
</evidence>
<evidence type="ECO:0000269" key="4">
    <source>
    </source>
</evidence>
<evidence type="ECO:0000303" key="5">
    <source>
    </source>
</evidence>
<evidence type="ECO:0000305" key="6"/>
<sequence length="270" mass="29258">MANPFVKAWKYLMALFSSKIDEHADPKVQIQQAIEEAQRTHQALTQQAAQVIGNQRQLEMRLNRQLADIEKLQVNVRQALTLADQATAAGDAAKATEYNNAAEAFAAQLVTAEQSVEDLKTLHDQALSAAAQAKKAVERNAMVLQQKIAERTKLLSQLEQAKMQEQVSASLRSMSELAAPGNTPSLDEVRDKIERRYANAIGSAELAESSVQGRMLEVEQAGIQMAGHSRLEQIRASMRGEALPAGGTTATPRPATETSGGAIAEQPYGQ</sequence>
<dbReference type="EMBL" id="AL123456">
    <property type="protein sequence ID" value="CCP45543.1"/>
    <property type="molecule type" value="Genomic_DNA"/>
</dbReference>
<dbReference type="PIR" id="A60176">
    <property type="entry name" value="A60176"/>
</dbReference>
<dbReference type="RefSeq" id="WP_003414030.1">
    <property type="nucleotide sequence ID" value="NZ_NVQJ01000020.1"/>
</dbReference>
<dbReference type="SMR" id="P9WHP5"/>
<dbReference type="STRING" id="83332.Rv2744c"/>
<dbReference type="PaxDb" id="83332-Rv2744c"/>
<dbReference type="DNASU" id="888304"/>
<dbReference type="GeneID" id="45426731"/>
<dbReference type="KEGG" id="mtu:Rv2744c"/>
<dbReference type="KEGG" id="mtv:RVBD_2744c"/>
<dbReference type="TubercuList" id="Rv2744c"/>
<dbReference type="eggNOG" id="COG1842">
    <property type="taxonomic scope" value="Bacteria"/>
</dbReference>
<dbReference type="InParanoid" id="P9WHP5"/>
<dbReference type="OrthoDB" id="3542619at2"/>
<dbReference type="PhylomeDB" id="P9WHP5"/>
<dbReference type="Proteomes" id="UP000001584">
    <property type="component" value="Chromosome"/>
</dbReference>
<dbReference type="GO" id="GO:0005737">
    <property type="term" value="C:cytoplasm"/>
    <property type="evidence" value="ECO:0007669"/>
    <property type="project" value="UniProtKB-SubCell"/>
</dbReference>
<dbReference type="GO" id="GO:0009274">
    <property type="term" value="C:peptidoglycan-based cell wall"/>
    <property type="evidence" value="ECO:0007005"/>
    <property type="project" value="MTBBASE"/>
</dbReference>
<dbReference type="GO" id="GO:0005886">
    <property type="term" value="C:plasma membrane"/>
    <property type="evidence" value="ECO:0007005"/>
    <property type="project" value="MTBBASE"/>
</dbReference>
<dbReference type="InterPro" id="IPR007157">
    <property type="entry name" value="PspA_VIPP1"/>
</dbReference>
<dbReference type="Pfam" id="PF04012">
    <property type="entry name" value="PspA_IM30"/>
    <property type="match status" value="1"/>
</dbReference>
<feature type="chain" id="PRO_0000166290" description="PspA protein">
    <location>
        <begin position="1"/>
        <end position="270"/>
    </location>
</feature>
<feature type="region of interest" description="Disordered" evidence="1">
    <location>
        <begin position="238"/>
        <end position="270"/>
    </location>
</feature>
<feature type="compositionally biased region" description="Low complexity" evidence="1">
    <location>
        <begin position="240"/>
        <end position="258"/>
    </location>
</feature>
<gene>
    <name evidence="5" type="primary">pspA</name>
    <name type="ordered locus">Rv2744c</name>
    <name type="ORF">MTV002.09c</name>
</gene>
<reference key="1">
    <citation type="journal article" date="1998" name="Nature">
        <title>Deciphering the biology of Mycobacterium tuberculosis from the complete genome sequence.</title>
        <authorList>
            <person name="Cole S.T."/>
            <person name="Brosch R."/>
            <person name="Parkhill J."/>
            <person name="Garnier T."/>
            <person name="Churcher C.M."/>
            <person name="Harris D.E."/>
            <person name="Gordon S.V."/>
            <person name="Eiglmeier K."/>
            <person name="Gas S."/>
            <person name="Barry C.E. III"/>
            <person name="Tekaia F."/>
            <person name="Badcock K."/>
            <person name="Basham D."/>
            <person name="Brown D."/>
            <person name="Chillingworth T."/>
            <person name="Connor R."/>
            <person name="Davies R.M."/>
            <person name="Devlin K."/>
            <person name="Feltwell T."/>
            <person name="Gentles S."/>
            <person name="Hamlin N."/>
            <person name="Holroyd S."/>
            <person name="Hornsby T."/>
            <person name="Jagels K."/>
            <person name="Krogh A."/>
            <person name="McLean J."/>
            <person name="Moule S."/>
            <person name="Murphy L.D."/>
            <person name="Oliver S."/>
            <person name="Osborne J."/>
            <person name="Quail M.A."/>
            <person name="Rajandream M.A."/>
            <person name="Rogers J."/>
            <person name="Rutter S."/>
            <person name="Seeger K."/>
            <person name="Skelton S."/>
            <person name="Squares S."/>
            <person name="Squares R."/>
            <person name="Sulston J.E."/>
            <person name="Taylor K."/>
            <person name="Whitehead S."/>
            <person name="Barrell B.G."/>
        </authorList>
    </citation>
    <scope>NUCLEOTIDE SEQUENCE [LARGE SCALE GENOMIC DNA]</scope>
    <source>
        <strain>ATCC 25618 / H37Rv</strain>
    </source>
</reference>
<reference key="2">
    <citation type="journal article" date="2011" name="PLoS ONE">
        <title>The HtrA-like serine protease PepD interacts with and modulates the Mycobacterium tuberculosis 35-kDa antigen outer envelope protein.</title>
        <authorList>
            <person name="White M.J."/>
            <person name="Savaryn J.P."/>
            <person name="Bretl D.J."/>
            <person name="He H."/>
            <person name="Penoske R.M."/>
            <person name="Terhune S.S."/>
            <person name="Zahrt T.C."/>
        </authorList>
    </citation>
    <scope>ACTIVITY REGULATION</scope>
    <scope>INTERACTION WITH PEPD</scope>
    <source>
        <strain>ATCC 27294 / TMC 102 / H37Rv</strain>
    </source>
</reference>
<reference key="3">
    <citation type="journal article" date="2011" name="Mol. Cell. Proteomics">
        <title>Proteogenomic analysis of Mycobacterium tuberculosis by high resolution mass spectrometry.</title>
        <authorList>
            <person name="Kelkar D.S."/>
            <person name="Kumar D."/>
            <person name="Kumar P."/>
            <person name="Balakrishnan L."/>
            <person name="Muthusamy B."/>
            <person name="Yadav A.K."/>
            <person name="Shrivastava P."/>
            <person name="Marimuthu A."/>
            <person name="Anand S."/>
            <person name="Sundaram H."/>
            <person name="Kingsbury R."/>
            <person name="Harsha H.C."/>
            <person name="Nair B."/>
            <person name="Prasad T.S."/>
            <person name="Chauhan D.S."/>
            <person name="Katoch K."/>
            <person name="Katoch V.M."/>
            <person name="Kumar P."/>
            <person name="Chaerkady R."/>
            <person name="Ramachandran S."/>
            <person name="Dash D."/>
            <person name="Pandey A."/>
        </authorList>
    </citation>
    <scope>IDENTIFICATION BY MASS SPECTROMETRY [LARGE SCALE ANALYSIS]</scope>
    <source>
        <strain>ATCC 25618 / H37Rv</strain>
    </source>
</reference>
<reference key="4">
    <citation type="journal article" date="2015" name="Mol. Microbiol.">
        <title>The Psp system of Mycobacterium tuberculosis integrates envelope stress-sensing and envelope-preserving functions.</title>
        <authorList>
            <person name="Datta P."/>
            <person name="Ravi J."/>
            <person name="Guerrini V."/>
            <person name="Chauhan R."/>
            <person name="Neiditch M.B."/>
            <person name="Shell S.S."/>
            <person name="Fortune S.M."/>
            <person name="Hancioglu B."/>
            <person name="Igoshin O.A."/>
            <person name="Gennaro M.L."/>
        </authorList>
    </citation>
    <scope>FUNCTION</scope>
    <scope>ACTIVITY REGULATION</scope>
    <scope>INTERACTION WITH CLGR AND RV2743C</scope>
    <scope>INDUCTION</scope>
</reference>
<reference key="5">
    <citation type="journal article" date="2016" name="J. Bacteriol.">
        <title>Rv2744c is a PspA ortholog that regulates lipid droplet homeostasis and nonreplicating persistence in Mycobacterium tuberculosis.</title>
        <authorList>
            <person name="Armstrong R.M."/>
            <person name="Adams K.L."/>
            <person name="Zilisch J.E."/>
            <person name="Bretl D.J."/>
            <person name="Sato H."/>
            <person name="Anderson D.M."/>
            <person name="Zahrt T.C."/>
        </authorList>
    </citation>
    <scope>FUNCTION</scope>
    <scope>SUBUNIT</scope>
    <scope>SUBCELLULAR LOCATION</scope>
    <scope>INDUCTION</scope>
    <scope>DISRUPTION PHENOTYPE</scope>
    <scope>OVEREXPRESSION</scope>
    <source>
        <strain>ATCC 27294 / TMC 102 / H37Rv</strain>
    </source>
</reference>
<protein>
    <recommendedName>
        <fullName evidence="6">PspA protein</fullName>
    </recommendedName>
    <alternativeName>
        <fullName>35 kDa protein</fullName>
    </alternativeName>
</protein>
<comment type="function">
    <text evidence="3 4">Involved in resistance to stress (PubMed:25899163, PubMed:27002134). Facilitates intracellular growth of M.tuberculosis (PubMed:25899163). Associates with and regulates lipid droplets (LDs) homeostasis under conditions of stress and may regulate non-replicating persistence (NRP) (PubMed:27002134). Could be involved in preservation of envelope integrity and tolerance to surface stress (PubMed:25899163). Has an inhibitory effect on ClgR activity (PubMed:25899163). May block ClgR activity after stress and then, form a multiprotein complex with Rv2743c-Rv2742c, leading to the release of ClgR (PubMed:25899163).</text>
</comment>
<comment type="activity regulation">
    <text evidence="2 3">Levels are regulated by proteolytic cleavage by PepD to help maintain cell envelope homeostasis.</text>
</comment>
<comment type="subunit">
    <text evidence="2 3 4">Self-associates and forms homooligomeric complexes of high molecular weight in vitro (PubMed:27002134). Datta et al. show that PspA interacts with ClgR and Rv2743c, but Armstrong et al. fail to observe interaction with either ClgR or Rv2743c in E.coli in vivo when assayed using a bacterial adenylate two-hybrid assay (PubMed:25899163, PubMed:27002134). Also interacts with the serine protease PepD (PubMed:21445360).</text>
</comment>
<comment type="subcellular location">
    <subcellularLocation>
        <location evidence="4">Cytoplasm</location>
    </subcellularLocation>
    <text evidence="4">Localizes to the surface of lipid droplets (LDs).</text>
</comment>
<comment type="induction">
    <text evidence="3 4">Expression is regulated by ClgR (PubMed:25899163). Induced by carbonyl cyanide m-chlorophenyl hydrazone (CCCP) (PubMed:25899163). Induced by the cell envelope stressor SDS (PubMed:27002134).</text>
</comment>
<comment type="disruption phenotype">
    <text evidence="4">Loss of the gene does not alter resistance to cell envelope stressors.</text>
</comment>
<comment type="miscellaneous">
    <text evidence="4">Overexpression of PspA results in altered lipid droplet morphology.</text>
</comment>
<comment type="similarity">
    <text evidence="6">Belongs to the PspA/Vipp/IM30 family.</text>
</comment>
<proteinExistence type="evidence at protein level"/>
<keyword id="KW-0963">Cytoplasm</keyword>
<keyword id="KW-1185">Reference proteome</keyword>
<keyword id="KW-0346">Stress response</keyword>
<keyword id="KW-0843">Virulence</keyword>
<name>PSPA_MYCTU</name>
<accession>P9WHP5</accession>
<accession>L0TD78</accession>
<accession>P0C5C4</accession>
<accession>P31511</accession>